<organism>
    <name type="scientific">Abies balsamea</name>
    <name type="common">Balsam fir</name>
    <name type="synonym">Pinus balsamea</name>
    <dbReference type="NCBI Taxonomy" id="90345"/>
    <lineage>
        <taxon>Eukaryota</taxon>
        <taxon>Viridiplantae</taxon>
        <taxon>Streptophyta</taxon>
        <taxon>Embryophyta</taxon>
        <taxon>Tracheophyta</taxon>
        <taxon>Spermatophyta</taxon>
        <taxon>Pinopsida</taxon>
        <taxon>Pinidae</taxon>
        <taxon>Conifers I</taxon>
        <taxon>Pinales</taxon>
        <taxon>Pinaceae</taxon>
        <taxon>Abies</taxon>
    </lineage>
</organism>
<accession>H8ZM70</accession>
<dbReference type="EC" id="4.2.3.18"/>
<dbReference type="EC" id="4.2.3.32"/>
<dbReference type="EC" id="4.2.3.132"/>
<dbReference type="EC" id="5.5.1.12"/>
<dbReference type="EMBL" id="JN254805">
    <property type="protein sequence ID" value="AEL99950.1"/>
    <property type="molecule type" value="mRNA"/>
</dbReference>
<dbReference type="SMR" id="H8ZM70"/>
<dbReference type="UniPathway" id="UPA00924"/>
<dbReference type="GO" id="GO:0009507">
    <property type="term" value="C:chloroplast"/>
    <property type="evidence" value="ECO:0007669"/>
    <property type="project" value="UniProtKB-SubCell"/>
</dbReference>
<dbReference type="GO" id="GO:0050554">
    <property type="term" value="F:abietadiene synthase activity"/>
    <property type="evidence" value="ECO:0007669"/>
    <property type="project" value="UniProtKB-EC"/>
</dbReference>
<dbReference type="GO" id="GO:0050559">
    <property type="term" value="F:copalyl diphosphate synthase activity"/>
    <property type="evidence" value="ECO:0007669"/>
    <property type="project" value="UniProtKB-EC"/>
</dbReference>
<dbReference type="GO" id="GO:0052678">
    <property type="term" value="F:levopimaradiene synthase activity"/>
    <property type="evidence" value="ECO:0007669"/>
    <property type="project" value="UniProtKB-EC"/>
</dbReference>
<dbReference type="GO" id="GO:0000287">
    <property type="term" value="F:magnesium ion binding"/>
    <property type="evidence" value="ECO:0007669"/>
    <property type="project" value="InterPro"/>
</dbReference>
<dbReference type="GO" id="GO:0010333">
    <property type="term" value="F:terpene synthase activity"/>
    <property type="evidence" value="ECO:0007669"/>
    <property type="project" value="InterPro"/>
</dbReference>
<dbReference type="GO" id="GO:0016102">
    <property type="term" value="P:diterpenoid biosynthetic process"/>
    <property type="evidence" value="ECO:0007669"/>
    <property type="project" value="InterPro"/>
</dbReference>
<dbReference type="CDD" id="cd00684">
    <property type="entry name" value="Terpene_cyclase_plant_C1"/>
    <property type="match status" value="1"/>
</dbReference>
<dbReference type="FunFam" id="1.50.10.130:FF:000002">
    <property type="entry name" value="Ent-copalyl diphosphate synthase, chloroplastic"/>
    <property type="match status" value="1"/>
</dbReference>
<dbReference type="FunFam" id="1.10.600.10:FF:000005">
    <property type="entry name" value="Ent-kaur-16-ene synthase, chloroplastic"/>
    <property type="match status" value="1"/>
</dbReference>
<dbReference type="Gene3D" id="1.50.10.160">
    <property type="match status" value="1"/>
</dbReference>
<dbReference type="Gene3D" id="1.10.600.10">
    <property type="entry name" value="Farnesyl Diphosphate Synthase"/>
    <property type="match status" value="1"/>
</dbReference>
<dbReference type="Gene3D" id="1.50.10.130">
    <property type="entry name" value="Terpene synthase, N-terminal domain"/>
    <property type="match status" value="1"/>
</dbReference>
<dbReference type="InterPro" id="IPR008949">
    <property type="entry name" value="Isoprenoid_synthase_dom_sf"/>
</dbReference>
<dbReference type="InterPro" id="IPR034741">
    <property type="entry name" value="Terpene_cyclase-like_1_C"/>
</dbReference>
<dbReference type="InterPro" id="IPR044814">
    <property type="entry name" value="Terpene_cyclase_plant_C1"/>
</dbReference>
<dbReference type="InterPro" id="IPR001906">
    <property type="entry name" value="Terpene_synth_N"/>
</dbReference>
<dbReference type="InterPro" id="IPR036965">
    <property type="entry name" value="Terpene_synth_N_sf"/>
</dbReference>
<dbReference type="InterPro" id="IPR050148">
    <property type="entry name" value="Terpene_synthase-like"/>
</dbReference>
<dbReference type="InterPro" id="IPR005630">
    <property type="entry name" value="Terpene_synthase_metal-bd"/>
</dbReference>
<dbReference type="InterPro" id="IPR008930">
    <property type="entry name" value="Terpenoid_cyclase/PrenylTrfase"/>
</dbReference>
<dbReference type="PANTHER" id="PTHR31739">
    <property type="entry name" value="ENT-COPALYL DIPHOSPHATE SYNTHASE, CHLOROPLASTIC"/>
    <property type="match status" value="1"/>
</dbReference>
<dbReference type="PANTHER" id="PTHR31739:SF4">
    <property type="entry name" value="ENT-COPALYL DIPHOSPHATE SYNTHASE, CHLOROPLASTIC"/>
    <property type="match status" value="1"/>
</dbReference>
<dbReference type="Pfam" id="PF01397">
    <property type="entry name" value="Terpene_synth"/>
    <property type="match status" value="1"/>
</dbReference>
<dbReference type="Pfam" id="PF03936">
    <property type="entry name" value="Terpene_synth_C"/>
    <property type="match status" value="1"/>
</dbReference>
<dbReference type="SFLD" id="SFLDG01019">
    <property type="entry name" value="Terpene_Cyclase_Like_1_C_Termi"/>
    <property type="match status" value="1"/>
</dbReference>
<dbReference type="SFLD" id="SFLDG01604">
    <property type="entry name" value="Terpene_Cyclase_Like_1_C_Termi"/>
    <property type="match status" value="1"/>
</dbReference>
<dbReference type="SFLD" id="SFLDG01014">
    <property type="entry name" value="Terpene_Cyclase_Like_1_N-term"/>
    <property type="match status" value="1"/>
</dbReference>
<dbReference type="SFLD" id="SFLDG01605">
    <property type="entry name" value="Terpene_Cyclase_Like_1_N-term"/>
    <property type="match status" value="1"/>
</dbReference>
<dbReference type="SUPFAM" id="SSF48239">
    <property type="entry name" value="Terpenoid cyclases/Protein prenyltransferases"/>
    <property type="match status" value="2"/>
</dbReference>
<dbReference type="SUPFAM" id="SSF48576">
    <property type="entry name" value="Terpenoid synthases"/>
    <property type="match status" value="1"/>
</dbReference>
<proteinExistence type="evidence at protein level"/>
<comment type="function">
    <text evidence="6">Involved in defensive oleoresin formation in conifers in response to insect attack or other injury. Involved in diterpene (C20) olefins biosynthesis. Bifunctional enzyme that catalyzes two sequential cyclizations of geranylgeranyl diphosphate (GGPP) to abietadiene. The copalyl diphosphate (CPP) intermediate diffuses freely between the 2 active sites in the enzyme.</text>
</comment>
<comment type="catalytic activity">
    <reaction evidence="6">
        <text>(2E,6E,10E)-geranylgeranyl diphosphate = (+)-copalyl diphosphate</text>
        <dbReference type="Rhea" id="RHEA:24316"/>
        <dbReference type="ChEBI" id="CHEBI:58635"/>
        <dbReference type="ChEBI" id="CHEBI:58756"/>
        <dbReference type="EC" id="5.5.1.12"/>
    </reaction>
</comment>
<comment type="catalytic activity">
    <reaction evidence="6">
        <text>(+)-copalyl diphosphate = abieta-7,13-diene + diphosphate</text>
        <dbReference type="Rhea" id="RHEA:13873"/>
        <dbReference type="ChEBI" id="CHEBI:30232"/>
        <dbReference type="ChEBI" id="CHEBI:33019"/>
        <dbReference type="ChEBI" id="CHEBI:58635"/>
        <dbReference type="EC" id="4.2.3.18"/>
    </reaction>
</comment>
<comment type="catalytic activity">
    <reaction evidence="6">
        <text>(+)-copalyl diphosphate = neoabietadiene + diphosphate</text>
        <dbReference type="Rhea" id="RHEA:33987"/>
        <dbReference type="ChEBI" id="CHEBI:29651"/>
        <dbReference type="ChEBI" id="CHEBI:33019"/>
        <dbReference type="ChEBI" id="CHEBI:58635"/>
        <dbReference type="EC" id="4.2.3.132"/>
    </reaction>
</comment>
<comment type="catalytic activity">
    <reaction evidence="6">
        <text>(+)-copalyl diphosphate = abieta-8(14),12-diene + diphosphate</text>
        <dbReference type="Rhea" id="RHEA:25548"/>
        <dbReference type="ChEBI" id="CHEBI:29616"/>
        <dbReference type="ChEBI" id="CHEBI:33019"/>
        <dbReference type="ChEBI" id="CHEBI:58635"/>
        <dbReference type="EC" id="4.2.3.32"/>
    </reaction>
</comment>
<comment type="cofactor">
    <cofactor evidence="4">
        <name>Mg(2+)</name>
        <dbReference type="ChEBI" id="CHEBI:18420"/>
    </cofactor>
    <text evidence="4">Binds 3 Mg(2+) ions per subunit.</text>
</comment>
<comment type="pathway">
    <text>Terpene metabolism; oleoresin biosynthesis.</text>
</comment>
<comment type="subunit">
    <text evidence="1">Monomer.</text>
</comment>
<comment type="subcellular location">
    <subcellularLocation>
        <location evidence="1">Plastid</location>
        <location evidence="1">Chloroplast</location>
    </subcellularLocation>
</comment>
<comment type="domain">
    <text evidence="7">The Asp-Xaa-Asp-Asp (DXDD) motif is important for the catalytic activity in the class II active site relevant for the cyclization of GGPP. The Asp-Asp-Xaa-Xaa-Asp/Glu (DDXXD/E) motif is important for the catalytic activity in the class I active site, presumably through binding to Mg(2+).</text>
</comment>
<comment type="similarity">
    <text evidence="7">Belongs to the terpene synthase family. Tpsd subfamily.</text>
</comment>
<feature type="transit peptide" description="Chloroplast" evidence="5">
    <location>
        <begin position="1" status="less than"/>
        <end position="46"/>
    </location>
</feature>
<feature type="chain" id="PRO_0000423339" description="Bifunctional abietadiene synthase, chloroplastic">
    <location>
        <begin position="47"/>
        <end position="844"/>
    </location>
</feature>
<feature type="short sequence motif" description="DXDD motif" evidence="7">
    <location>
        <begin position="378"/>
        <end position="381"/>
    </location>
</feature>
<feature type="short sequence motif" description="DDXXD motif" evidence="7">
    <location>
        <begin position="597"/>
        <end position="601"/>
    </location>
</feature>
<feature type="binding site" evidence="3">
    <location>
        <position position="245"/>
    </location>
    <ligand>
        <name>substrate</name>
    </ligand>
</feature>
<feature type="binding site" evidence="2">
    <location>
        <position position="378"/>
    </location>
    <ligand>
        <name>Mg(2+)</name>
        <dbReference type="ChEBI" id="CHEBI:18420"/>
        <label>4</label>
    </ligand>
</feature>
<feature type="binding site" evidence="2">
    <location>
        <position position="380"/>
    </location>
    <ligand>
        <name>Mg(2+)</name>
        <dbReference type="ChEBI" id="CHEBI:18420"/>
        <label>4</label>
    </ligand>
</feature>
<feature type="binding site" evidence="3">
    <location>
        <position position="465"/>
    </location>
    <ligand>
        <name>substrate</name>
    </ligand>
</feature>
<feature type="binding site" evidence="4">
    <location>
        <position position="597"/>
    </location>
    <ligand>
        <name>Mg(2+)</name>
        <dbReference type="ChEBI" id="CHEBI:18420"/>
        <label>1</label>
    </ligand>
</feature>
<feature type="binding site" evidence="4">
    <location>
        <position position="597"/>
    </location>
    <ligand>
        <name>Mg(2+)</name>
        <dbReference type="ChEBI" id="CHEBI:18420"/>
        <label>2</label>
    </ligand>
</feature>
<feature type="binding site" evidence="4">
    <location>
        <position position="601"/>
    </location>
    <ligand>
        <name>Mg(2+)</name>
        <dbReference type="ChEBI" id="CHEBI:18420"/>
        <label>1</label>
    </ligand>
</feature>
<feature type="binding site" evidence="4">
    <location>
        <position position="601"/>
    </location>
    <ligand>
        <name>Mg(2+)</name>
        <dbReference type="ChEBI" id="CHEBI:18420"/>
        <label>2</label>
    </ligand>
</feature>
<feature type="binding site" evidence="4">
    <location>
        <position position="741"/>
    </location>
    <ligand>
        <name>Mg(2+)</name>
        <dbReference type="ChEBI" id="CHEBI:18420"/>
        <label>3</label>
    </ligand>
</feature>
<feature type="binding site" evidence="4">
    <location>
        <position position="745"/>
    </location>
    <ligand>
        <name>Mg(2+)</name>
        <dbReference type="ChEBI" id="CHEBI:18420"/>
        <label>3</label>
    </ligand>
</feature>
<feature type="binding site" evidence="4">
    <location>
        <position position="749"/>
    </location>
    <ligand>
        <name>Mg(2+)</name>
        <dbReference type="ChEBI" id="CHEBI:18420"/>
        <label>3</label>
    </ligand>
</feature>
<feature type="non-terminal residue">
    <location>
        <position position="1"/>
    </location>
</feature>
<reference key="1">
    <citation type="journal article" date="2012" name="J. Biol. Chem.">
        <title>Bifunctional cis-abienol synthase from Abies balsamea discovered by transcriptome sequencing and its implications for diterpenoid fragrance production.</title>
        <authorList>
            <person name="Zerbe P."/>
            <person name="Chiang A."/>
            <person name="Yuen M."/>
            <person name="Hamberger B."/>
            <person name="Hamberger B."/>
            <person name="Draper J.A."/>
            <person name="Britton R."/>
            <person name="Bohlmann J."/>
        </authorList>
    </citation>
    <scope>NUCLEOTIDE SEQUENCE [MRNA]</scope>
    <scope>FUNCTION</scope>
    <scope>CATALYTIC ACTIVITY</scope>
</reference>
<evidence type="ECO:0000250" key="1"/>
<evidence type="ECO:0000250" key="2">
    <source>
        <dbReference type="UniProtKB" id="C7BKP9"/>
    </source>
</evidence>
<evidence type="ECO:0000250" key="3">
    <source>
        <dbReference type="UniProtKB" id="Q38802"/>
    </source>
</evidence>
<evidence type="ECO:0000250" key="4">
    <source>
        <dbReference type="UniProtKB" id="Q40577"/>
    </source>
</evidence>
<evidence type="ECO:0000255" key="5"/>
<evidence type="ECO:0000269" key="6">
    <source>
    </source>
</evidence>
<evidence type="ECO:0000305" key="7"/>
<sequence>QSIPHFSTTLNAGSSARKRRSLYLRWGKGSNKIIACVGEGATSVPYQSAEKNDSLYSSTLVKREFPPGFWKDDLIDSLTSSHKVAASDEKRIETLISEIKNMFRCMGYGETNPSAYDTAWVARIPALDGSDNPHFPETVEWILQNQLKDGSWGEGFYFLAYDRILATLACIITLTLWRTGETQVHKGIEFFRTQAGKMEDEADSHRPSGFEIVFPAMLKEAKILGLDLPYDLPFLKQIIEKREAKLKRIPTDVLYALPTTLLYSLEGLQEIVDWQKIMKLQSKDGSFLSSPASTAAVFMRTGNKKCLDFLNFVLKKFGNHVPCHYPLDLFERLWAVDTVERLGIDRHFKEEIKEALDYVYSHWDERGIGWARENPVPDIDDTAMGLRILRLHGYNVSSDVLKTFRDENGEFFCFLGQTQRGVTDMLNVNRCSHVSFPGETIMEEAKLCTERYLRNALENVDAFDKWAFKKNIRGEVEYALKYPWHKSMPRLEARSYIENYGPDDVWLGKTVYMMPYISNEKYLELAKLDFNKVQSIHQTELQDLRRWWKSSGFTDLNFTRERVTEIYFSPASFIFEPEFSKCREVYTKTSNFTVILDDLYDAHGSLDDLKLFTESVKRWDLSLVDQMPQQMKICFVGFYNTFNEIAKEGRESQGRDVLGYIQNVWKVQLEAYTKEAEWSEAKYVPSFNEYIENASVSIALGTVVLISALFTGEVLTDEVLSKIDRGSRFLQLMGLTGRLVNDTKTYQAERGQGEVASAIQCYMKDHPKISEEEALKHVYTVMENSLEELNREFVNNKIPDIYRRLVFETARIMQLFYMQGDGLTLSHDMEIKEHVKNCLFQPVA</sequence>
<gene>
    <name type="primary">LAS</name>
</gene>
<keyword id="KW-0150">Chloroplast</keyword>
<keyword id="KW-0413">Isomerase</keyword>
<keyword id="KW-0456">Lyase</keyword>
<keyword id="KW-0460">Magnesium</keyword>
<keyword id="KW-0479">Metal-binding</keyword>
<keyword id="KW-0511">Multifunctional enzyme</keyword>
<keyword id="KW-0934">Plastid</keyword>
<keyword id="KW-0809">Transit peptide</keyword>
<name>LAS_ABIBA</name>
<protein>
    <recommendedName>
        <fullName>Bifunctional abietadiene synthase, chloroplastic</fullName>
    </recommendedName>
    <alternativeName>
        <fullName>Abietadiene cyclase</fullName>
    </alternativeName>
    <alternativeName>
        <fullName>Diterpene synthase TPS1</fullName>
        <shortName>AbdiTPS1</shortName>
    </alternativeName>
    <alternativeName>
        <fullName>Levopimaradiene/abietadiene synthase</fullName>
        <shortName>AbLAS</shortName>
    </alternativeName>
    <domain>
        <recommendedName>
            <fullName>Abietadiene synthase</fullName>
            <ecNumber>4.2.3.18</ecNumber>
        </recommendedName>
        <alternativeName>
            <fullName>Levopimaradiene synthase</fullName>
            <ecNumber>4.2.3.32</ecNumber>
        </alternativeName>
        <alternativeName>
            <fullName>Neoabietadiene synthase</fullName>
            <ecNumber>4.2.3.132</ecNumber>
        </alternativeName>
    </domain>
    <domain>
        <recommendedName>
            <fullName>Copalyl diphosphate synthase</fullName>
            <ecNumber>5.5.1.12</ecNumber>
        </recommendedName>
    </domain>
</protein>